<sequence>MRPAALLLCLTLLHCAGAGFPEDSEPISISHGNYTKQYPVFVGHKPGRNTTQRHRLDIQMIMIMNRTLYVAARDHIYTVDIDTSHTEEIYCSKKLTWKSRQADVDTCRMKGKHKDECHNFIKVLLKKNDDTLFVCGTNAFNPSCRNYRVDTLETFGDEFSGMARCPYDAKHANIALFADGKLYSATVTDFLAIDAVIYRSLGDSPTLRTVKHDSKWLKEPYFVQAVDYGDYIYFFFREIAVEYNTMGKVVFPRVAQVCKNDMGGSQRVLEKQWTSFLKARLNCSVPGDSHFYFNILQAVTDVIRINGRDVVLATFSTPYNSIPGSAVCAYDMLDIANVFTGRFKEQKSPDSTWTPVPDERVPKPRPGCCAGSSSLEKYATSNEFPDDTLNFIKTHPLMDEAVPSIINRPWFLRTMVRYRLTKIAVDNAAGPYQNHTVVFLGSEKGIILKFLARIGSSGFLNGSLFLEEMNVYNPEKCSYDGVEDKRIMGMQLDRASGSLYVAFSTCVIKVPLGRCERHGKCKKTCIASRDPYCGWVRESGSCAHLSPLSRLTFEQDIERGNTDGLGDCHNSFVALNGHASSLYPSTTTSDSASRDGYESRGGMLDWNDLLEAPGSTDPLGAVSSHNHQDKKGVIRESYLKSNDQLVPVTLLAIAVILAFVMGAVFSGIIVYCVCDHRRKDVAVVQRKEKELTHSRRGSMSSVTKLSGLFGDTQSKDPKPEAILTPLMHNGKLATPSNTAKMLIKADQHHLDLTALPTPESTPTLQQKRKPNRGSREWERNQNIINACTKDMPPMGSPVIPTDLPLRASPSHIPSVVVLPITQQGYQHEYVDQPKMSEVVAQMALEDQAATLEYKTIKEHLSSKSPNHGVNLVENLDSLPPKVPQREASLGPPGTSLSQTGLSKRLEMQHSSSYGLEYKRSYPTNSLTRSHQTTTLKRNNTNSSNSSHLSRNQSFGRGDNPPPAPQRVDSIQVHSSQPSGQAVTVSRQPSLNAYNSLTRSGLKRTPSLKPDVPPKPSFAPLSTSMKPNDACT</sequence>
<accession>O35464</accession>
<accession>Q6P5A8</accession>
<accession>Q6PCN9</accession>
<accession>Q9EQ71</accession>
<name>SEM6A_MOUSE</name>
<feature type="signal peptide" evidence="2">
    <location>
        <begin position="1"/>
        <end position="18"/>
    </location>
</feature>
<feature type="chain" id="PRO_0000032340" description="Semaphorin-6A">
    <location>
        <begin position="19"/>
        <end position="1031"/>
    </location>
</feature>
<feature type="topological domain" description="Extracellular" evidence="2">
    <location>
        <begin position="19"/>
        <end position="649"/>
    </location>
</feature>
<feature type="transmembrane region" description="Helical" evidence="2">
    <location>
        <begin position="650"/>
        <end position="670"/>
    </location>
</feature>
<feature type="topological domain" description="Cytoplasmic" evidence="2">
    <location>
        <begin position="671"/>
        <end position="1031"/>
    </location>
</feature>
<feature type="domain" description="Sema" evidence="3">
    <location>
        <begin position="24"/>
        <end position="512"/>
    </location>
</feature>
<feature type="region of interest" description="Disordered" evidence="4">
    <location>
        <begin position="754"/>
        <end position="777"/>
    </location>
</feature>
<feature type="region of interest" description="Disordered" evidence="4">
    <location>
        <begin position="861"/>
        <end position="902"/>
    </location>
</feature>
<feature type="region of interest" description="Disordered" evidence="4">
    <location>
        <begin position="914"/>
        <end position="1031"/>
    </location>
</feature>
<feature type="compositionally biased region" description="Polar residues" evidence="4">
    <location>
        <begin position="921"/>
        <end position="931"/>
    </location>
</feature>
<feature type="compositionally biased region" description="Low complexity" evidence="4">
    <location>
        <begin position="932"/>
        <end position="951"/>
    </location>
</feature>
<feature type="compositionally biased region" description="Polar residues" evidence="4">
    <location>
        <begin position="971"/>
        <end position="998"/>
    </location>
</feature>
<feature type="compositionally biased region" description="Polar residues" evidence="4">
    <location>
        <begin position="1019"/>
        <end position="1031"/>
    </location>
</feature>
<feature type="modified residue" description="Phosphoserine" evidence="1">
    <location>
        <position position="698"/>
    </location>
</feature>
<feature type="modified residue" description="Phosphoserine" evidence="1">
    <location>
        <position position="953"/>
    </location>
</feature>
<feature type="glycosylation site" description="N-linked (GlcNAc...) asparagine" evidence="2">
    <location>
        <position position="33"/>
    </location>
</feature>
<feature type="glycosylation site" description="N-linked (GlcNAc...) asparagine" evidence="2">
    <location>
        <position position="49"/>
    </location>
</feature>
<feature type="glycosylation site" description="N-linked (GlcNAc...) asparagine" evidence="8">
    <location>
        <position position="65"/>
    </location>
</feature>
<feature type="glycosylation site" description="N-linked (GlcNAc...) asparagine" evidence="8 9">
    <location>
        <position position="282"/>
    </location>
</feature>
<feature type="glycosylation site" description="N-linked (GlcNAc...) asparagine" evidence="8 9">
    <location>
        <position position="434"/>
    </location>
</feature>
<feature type="glycosylation site" description="N-linked (GlcNAc...) asparagine" evidence="2">
    <location>
        <position position="461"/>
    </location>
</feature>
<feature type="disulfide bond">
    <location>
        <begin position="107"/>
        <end position="117"/>
    </location>
</feature>
<feature type="disulfide bond">
    <location>
        <begin position="135"/>
        <end position="144"/>
    </location>
</feature>
<feature type="disulfide bond">
    <location>
        <begin position="258"/>
        <end position="369"/>
    </location>
</feature>
<feature type="disulfide bond">
    <location>
        <begin position="283"/>
        <end position="328"/>
    </location>
</feature>
<feature type="disulfide bond">
    <location>
        <begin position="477"/>
        <end position="506"/>
    </location>
</feature>
<feature type="disulfide bond">
    <location>
        <begin position="515"/>
        <end position="533"/>
    </location>
</feature>
<feature type="disulfide bond">
    <location>
        <begin position="521"/>
        <end position="568"/>
    </location>
</feature>
<feature type="disulfide bond">
    <location>
        <begin position="525"/>
        <end position="542"/>
    </location>
</feature>
<feature type="splice variant" id="VSP_012097" description="In isoform 2." evidence="10">
    <location>
        <begin position="439"/>
        <end position="464"/>
    </location>
</feature>
<feature type="splice variant" id="VSP_012098" description="In isoform 3." evidence="11">
    <location>
        <begin position="577"/>
        <end position="631"/>
    </location>
</feature>
<feature type="mutagenesis site" description="Strongly reduced affinity for PLXNA2." evidence="8">
    <original>L</original>
    <variation>R</variation>
    <location>
        <position position="191"/>
    </location>
</feature>
<feature type="mutagenesis site" description="Strongly reduced affinity for PLXNA2." evidence="9">
    <original>H</original>
    <variation>N</variation>
    <location>
        <position position="212"/>
    </location>
</feature>
<feature type="mutagenesis site" description="Abolishes homodimerization." evidence="8">
    <original>I</original>
    <variation>E</variation>
    <location>
        <position position="322"/>
    </location>
</feature>
<feature type="mutagenesis site" description="Strongly reduced affinity for PLXNA2." evidence="9">
    <original>K</original>
    <variation>E</variation>
    <location>
        <position position="393"/>
    </location>
</feature>
<feature type="mutagenesis site" description="Formation of disulfide-linked homodimer." evidence="9">
    <original>M</original>
    <variation>C</variation>
    <location>
        <position position="415"/>
    </location>
</feature>
<feature type="sequence conflict" description="In Ref. 1; AAG29494." evidence="12" ref="1">
    <original>A</original>
    <variation>V</variation>
    <location>
        <position position="172"/>
    </location>
</feature>
<feature type="sequence conflict" description="In Ref. 1; AAG29494." evidence="12" ref="1">
    <original>L</original>
    <variation>P</variation>
    <location>
        <position position="201"/>
    </location>
</feature>
<feature type="sequence conflict" description="In Ref. 1; AAG29494." evidence="12" ref="1">
    <original>N</original>
    <variation>D</variation>
    <location>
        <position position="337"/>
    </location>
</feature>
<feature type="sequence conflict" description="In Ref. 1; AAG29494." evidence="12" ref="1">
    <original>S</original>
    <variation>N</variation>
    <location>
        <position position="585"/>
    </location>
</feature>
<feature type="sequence conflict" description="In Ref. 1; AAG29494." evidence="12" ref="1">
    <original>Q</original>
    <variation>R</variation>
    <location>
        <position position="685"/>
    </location>
</feature>
<feature type="sequence conflict" description="In Ref. 1; AAG29494." evidence="12" ref="1">
    <original>TK</original>
    <variation>SE</variation>
    <location>
        <begin position="703"/>
        <end position="704"/>
    </location>
</feature>
<feature type="sequence conflict" description="In Ref. 1; AAG29494." evidence="12" ref="1">
    <original>P</original>
    <variation>S</variation>
    <location>
        <position position="735"/>
    </location>
</feature>
<feature type="sequence conflict" description="In Ref. 3; AAB86408." evidence="12" ref="3">
    <original>Q</original>
    <variation>E</variation>
    <location>
        <position position="766"/>
    </location>
</feature>
<feature type="sequence conflict" description="In Ref. 1; AAG29494." evidence="12" ref="1">
    <original>I</original>
    <variation>T</variation>
    <location>
        <position position="856"/>
    </location>
</feature>
<feature type="sequence conflict" description="In Ref. 3; AAB86408." evidence="12" ref="3">
    <original>KSPNHGVNLVENLDSLPPKVPQREAS</original>
    <variation>ESSPYVLKQFSEAFNRQGIILSVAVE</variation>
    <location>
        <begin position="863"/>
        <end position="888"/>
    </location>
</feature>
<feature type="strand" evidence="15">
    <location>
        <begin position="27"/>
        <end position="30"/>
    </location>
</feature>
<feature type="helix" evidence="15">
    <location>
        <begin position="32"/>
        <end position="35"/>
    </location>
</feature>
<feature type="strand" evidence="15">
    <location>
        <begin position="60"/>
        <end position="64"/>
    </location>
</feature>
<feature type="strand" evidence="15">
    <location>
        <begin position="67"/>
        <end position="71"/>
    </location>
</feature>
<feature type="strand" evidence="15">
    <location>
        <begin position="73"/>
        <end position="80"/>
    </location>
</feature>
<feature type="helix" evidence="15">
    <location>
        <begin position="81"/>
        <end position="83"/>
    </location>
</feature>
<feature type="strand" evidence="15">
    <location>
        <begin position="86"/>
        <end position="89"/>
    </location>
</feature>
<feature type="strand" evidence="15">
    <location>
        <begin position="93"/>
        <end position="96"/>
    </location>
</feature>
<feature type="helix" evidence="15">
    <location>
        <begin position="101"/>
        <end position="109"/>
    </location>
</feature>
<feature type="turn" evidence="15">
    <location>
        <begin position="114"/>
        <end position="116"/>
    </location>
</feature>
<feature type="strand" evidence="15">
    <location>
        <begin position="120"/>
        <end position="128"/>
    </location>
</feature>
<feature type="strand" evidence="15">
    <location>
        <begin position="131"/>
        <end position="136"/>
    </location>
</feature>
<feature type="turn" evidence="15">
    <location>
        <begin position="138"/>
        <end position="140"/>
    </location>
</feature>
<feature type="strand" evidence="15">
    <location>
        <begin position="143"/>
        <end position="148"/>
    </location>
</feature>
<feature type="turn" evidence="15">
    <location>
        <begin position="149"/>
        <end position="151"/>
    </location>
</feature>
<feature type="strand" evidence="14">
    <location>
        <begin position="154"/>
        <end position="160"/>
    </location>
</feature>
<feature type="turn" evidence="15">
    <location>
        <begin position="162"/>
        <end position="164"/>
    </location>
</feature>
<feature type="strand" evidence="15">
    <location>
        <begin position="174"/>
        <end position="178"/>
    </location>
</feature>
<feature type="strand" evidence="15">
    <location>
        <begin position="181"/>
        <end position="189"/>
    </location>
</feature>
<feature type="strand" evidence="15">
    <location>
        <begin position="195"/>
        <end position="200"/>
    </location>
</feature>
<feature type="turn" evidence="15">
    <location>
        <begin position="214"/>
        <end position="216"/>
    </location>
</feature>
<feature type="strand" evidence="15">
    <location>
        <begin position="221"/>
        <end position="228"/>
    </location>
</feature>
<feature type="strand" evidence="15">
    <location>
        <begin position="231"/>
        <end position="239"/>
    </location>
</feature>
<feature type="helix" evidence="15">
    <location>
        <begin position="241"/>
        <end position="243"/>
    </location>
</feature>
<feature type="strand" evidence="15">
    <location>
        <begin position="244"/>
        <end position="247"/>
    </location>
</feature>
<feature type="strand" evidence="15">
    <location>
        <begin position="250"/>
        <end position="258"/>
    </location>
</feature>
<feature type="strand" evidence="15">
    <location>
        <begin position="266"/>
        <end position="269"/>
    </location>
</feature>
<feature type="strand" evidence="15">
    <location>
        <begin position="277"/>
        <end position="281"/>
    </location>
</feature>
<feature type="strand" evidence="15">
    <location>
        <begin position="287"/>
        <end position="289"/>
    </location>
</feature>
<feature type="strand" evidence="15">
    <location>
        <begin position="295"/>
        <end position="299"/>
    </location>
</feature>
<feature type="strand" evidence="15">
    <location>
        <begin position="303"/>
        <end position="305"/>
    </location>
</feature>
<feature type="strand" evidence="15">
    <location>
        <begin position="308"/>
        <end position="316"/>
    </location>
</feature>
<feature type="strand" evidence="15">
    <location>
        <begin position="319"/>
        <end position="322"/>
    </location>
</feature>
<feature type="strand" evidence="15">
    <location>
        <begin position="325"/>
        <end position="331"/>
    </location>
</feature>
<feature type="helix" evidence="15">
    <location>
        <begin position="332"/>
        <end position="338"/>
    </location>
</feature>
<feature type="strand" evidence="15">
    <location>
        <begin position="343"/>
        <end position="348"/>
    </location>
</feature>
<feature type="strand" evidence="15">
    <location>
        <begin position="353"/>
        <end position="355"/>
    </location>
</feature>
<feature type="helix" evidence="15">
    <location>
        <begin position="358"/>
        <end position="360"/>
    </location>
</feature>
<feature type="turn" evidence="15">
    <location>
        <begin position="374"/>
        <end position="377"/>
    </location>
</feature>
<feature type="helix" evidence="15">
    <location>
        <begin position="381"/>
        <end position="383"/>
    </location>
</feature>
<feature type="helix" evidence="15">
    <location>
        <begin position="386"/>
        <end position="394"/>
    </location>
</feature>
<feature type="strand" evidence="15">
    <location>
        <begin position="397"/>
        <end position="400"/>
    </location>
</feature>
<feature type="helix" evidence="15">
    <location>
        <begin position="405"/>
        <end position="407"/>
    </location>
</feature>
<feature type="strand" evidence="15">
    <location>
        <begin position="410"/>
        <end position="413"/>
    </location>
</feature>
<feature type="strand" evidence="15">
    <location>
        <begin position="415"/>
        <end position="418"/>
    </location>
</feature>
<feature type="strand" evidence="15">
    <location>
        <begin position="420"/>
        <end position="429"/>
    </location>
</feature>
<feature type="turn" evidence="15">
    <location>
        <begin position="430"/>
        <end position="433"/>
    </location>
</feature>
<feature type="strand" evidence="15">
    <location>
        <begin position="435"/>
        <end position="442"/>
    </location>
</feature>
<feature type="strand" evidence="15">
    <location>
        <begin position="445"/>
        <end position="452"/>
    </location>
</feature>
<feature type="helix" evidence="13">
    <location>
        <begin position="455"/>
        <end position="457"/>
    </location>
</feature>
<feature type="strand" evidence="15">
    <location>
        <begin position="464"/>
        <end position="470"/>
    </location>
</feature>
<feature type="helix" evidence="15">
    <location>
        <begin position="474"/>
        <end position="477"/>
    </location>
</feature>
<feature type="strand" evidence="15">
    <location>
        <begin position="489"/>
        <end position="493"/>
    </location>
</feature>
<feature type="helix" evidence="15">
    <location>
        <begin position="494"/>
        <end position="496"/>
    </location>
</feature>
<feature type="strand" evidence="15">
    <location>
        <begin position="498"/>
        <end position="502"/>
    </location>
</feature>
<feature type="strand" evidence="15">
    <location>
        <begin position="507"/>
        <end position="512"/>
    </location>
</feature>
<feature type="helix" evidence="15">
    <location>
        <begin position="516"/>
        <end position="518"/>
    </location>
</feature>
<feature type="helix" evidence="15">
    <location>
        <begin position="522"/>
        <end position="527"/>
    </location>
</feature>
<feature type="strand" evidence="15">
    <location>
        <begin position="533"/>
        <end position="536"/>
    </location>
</feature>
<feature type="turn" evidence="15">
    <location>
        <begin position="537"/>
        <end position="540"/>
    </location>
</feature>
<feature type="strand" evidence="15">
    <location>
        <begin position="541"/>
        <end position="544"/>
    </location>
</feature>
<feature type="strand" evidence="14">
    <location>
        <begin position="557"/>
        <end position="559"/>
    </location>
</feature>
<protein>
    <recommendedName>
        <fullName>Semaphorin-6A</fullName>
    </recommendedName>
    <alternativeName>
        <fullName>Semaphorin Q</fullName>
        <shortName>Sema Q</shortName>
    </alternativeName>
    <alternativeName>
        <fullName>Semaphorin VIA</fullName>
        <shortName>Sema VIA</shortName>
    </alternativeName>
    <alternativeName>
        <fullName>Semaphorin-6A-1</fullName>
        <shortName>SEMA6A-1</shortName>
    </alternativeName>
</protein>
<dbReference type="EMBL" id="AF288666">
    <property type="protein sequence ID" value="AAG29494.1"/>
    <property type="molecule type" value="mRNA"/>
</dbReference>
<dbReference type="EMBL" id="BC059238">
    <property type="protein sequence ID" value="AAH59238.1"/>
    <property type="molecule type" value="mRNA"/>
</dbReference>
<dbReference type="EMBL" id="BC062979">
    <property type="protein sequence ID" value="AAH62979.1"/>
    <property type="molecule type" value="mRNA"/>
</dbReference>
<dbReference type="EMBL" id="AF030430">
    <property type="protein sequence ID" value="AAB86408.1"/>
    <property type="molecule type" value="mRNA"/>
</dbReference>
<dbReference type="CCDS" id="CCDS37813.1">
    <molecule id="O35464-1"/>
</dbReference>
<dbReference type="CCDS" id="CCDS79642.1">
    <molecule id="O35464-3"/>
</dbReference>
<dbReference type="RefSeq" id="NP_001298026.1">
    <molecule id="O35464-3"/>
    <property type="nucleotide sequence ID" value="NM_001311097.1"/>
</dbReference>
<dbReference type="RefSeq" id="NP_061214.2">
    <molecule id="O35464-1"/>
    <property type="nucleotide sequence ID" value="NM_018744.2"/>
</dbReference>
<dbReference type="PDB" id="3AFC">
    <property type="method" value="X-ray"/>
    <property type="resolution" value="2.50 A"/>
    <property type="chains" value="A/B=19-570"/>
</dbReference>
<dbReference type="PDB" id="3AL8">
    <property type="method" value="X-ray"/>
    <property type="resolution" value="3.60 A"/>
    <property type="chains" value="A=19-570"/>
</dbReference>
<dbReference type="PDB" id="3OKW">
    <property type="method" value="X-ray"/>
    <property type="resolution" value="2.30 A"/>
    <property type="chains" value="A/B=19-571"/>
</dbReference>
<dbReference type="PDB" id="3OKY">
    <property type="method" value="X-ray"/>
    <property type="resolution" value="2.20 A"/>
    <property type="chains" value="B=19-571"/>
</dbReference>
<dbReference type="PDBsum" id="3AFC"/>
<dbReference type="PDBsum" id="3AL8"/>
<dbReference type="PDBsum" id="3OKW"/>
<dbReference type="PDBsum" id="3OKY"/>
<dbReference type="SMR" id="O35464"/>
<dbReference type="BioGRID" id="203173">
    <property type="interactions" value="7"/>
</dbReference>
<dbReference type="DIP" id="DIP-59220N"/>
<dbReference type="ELM" id="O35464"/>
<dbReference type="FunCoup" id="O35464">
    <property type="interactions" value="1040"/>
</dbReference>
<dbReference type="IntAct" id="O35464">
    <property type="interactions" value="2"/>
</dbReference>
<dbReference type="MINT" id="O35464"/>
<dbReference type="STRING" id="10090.ENSMUSP00000019791"/>
<dbReference type="GlyConnect" id="2701">
    <property type="glycosylation" value="1 N-Linked glycan (1 site)"/>
</dbReference>
<dbReference type="GlyCosmos" id="O35464">
    <property type="glycosylation" value="6 sites, 1 glycan"/>
</dbReference>
<dbReference type="GlyGen" id="O35464">
    <property type="glycosylation" value="7 sites, 5 N-linked glycans (4 sites)"/>
</dbReference>
<dbReference type="iPTMnet" id="O35464"/>
<dbReference type="PhosphoSitePlus" id="O35464"/>
<dbReference type="SwissPalm" id="O35464"/>
<dbReference type="PaxDb" id="10090-ENSMUSP00000019791"/>
<dbReference type="ProteomicsDB" id="256773">
    <molecule id="O35464-1"/>
</dbReference>
<dbReference type="ProteomicsDB" id="256774">
    <molecule id="O35464-2"/>
</dbReference>
<dbReference type="ProteomicsDB" id="256775">
    <molecule id="O35464-3"/>
</dbReference>
<dbReference type="Antibodypedia" id="25481">
    <property type="antibodies" value="317 antibodies from 30 providers"/>
</dbReference>
<dbReference type="DNASU" id="20358"/>
<dbReference type="Ensembl" id="ENSMUST00000019791.14">
    <molecule id="O35464-1"/>
    <property type="protein sequence ID" value="ENSMUSP00000019791.8"/>
    <property type="gene ID" value="ENSMUSG00000019647.18"/>
</dbReference>
<dbReference type="Ensembl" id="ENSMUST00000076043.13">
    <molecule id="O35464-3"/>
    <property type="protein sequence ID" value="ENSMUSP00000075420.7"/>
    <property type="gene ID" value="ENSMUSG00000019647.18"/>
</dbReference>
<dbReference type="Ensembl" id="ENSMUST00000156422.8">
    <molecule id="O35464-1"/>
    <property type="protein sequence ID" value="ENSMUSP00000121442.2"/>
    <property type="gene ID" value="ENSMUSG00000019647.18"/>
</dbReference>
<dbReference type="GeneID" id="20358"/>
<dbReference type="KEGG" id="mmu:20358"/>
<dbReference type="UCSC" id="uc008ewa.1">
    <molecule id="O35464-1"/>
    <property type="organism name" value="mouse"/>
</dbReference>
<dbReference type="UCSC" id="uc008ewb.1">
    <molecule id="O35464-3"/>
    <property type="organism name" value="mouse"/>
</dbReference>
<dbReference type="AGR" id="MGI:1203727"/>
<dbReference type="CTD" id="57556"/>
<dbReference type="MGI" id="MGI:1203727">
    <property type="gene designation" value="Sema6a"/>
</dbReference>
<dbReference type="VEuPathDB" id="HostDB:ENSMUSG00000019647"/>
<dbReference type="eggNOG" id="KOG3611">
    <property type="taxonomic scope" value="Eukaryota"/>
</dbReference>
<dbReference type="GeneTree" id="ENSGT00940000156565"/>
<dbReference type="HOGENOM" id="CLU_009051_2_0_1"/>
<dbReference type="InParanoid" id="O35464"/>
<dbReference type="OMA" id="HRRKDVT"/>
<dbReference type="OrthoDB" id="9988752at2759"/>
<dbReference type="PhylomeDB" id="O35464"/>
<dbReference type="TreeFam" id="TF316102"/>
<dbReference type="BioGRID-ORCS" id="20358">
    <property type="hits" value="3 hits in 79 CRISPR screens"/>
</dbReference>
<dbReference type="ChiTaRS" id="Sema6a">
    <property type="organism name" value="mouse"/>
</dbReference>
<dbReference type="EvolutionaryTrace" id="O35464"/>
<dbReference type="PRO" id="PR:O35464"/>
<dbReference type="Proteomes" id="UP000000589">
    <property type="component" value="Chromosome 18"/>
</dbReference>
<dbReference type="RNAct" id="O35464">
    <property type="molecule type" value="protein"/>
</dbReference>
<dbReference type="Bgee" id="ENSMUSG00000019647">
    <property type="expression patterns" value="Expressed in embryonic post-anal tail and 254 other cell types or tissues"/>
</dbReference>
<dbReference type="ExpressionAtlas" id="O35464">
    <property type="expression patterns" value="baseline and differential"/>
</dbReference>
<dbReference type="GO" id="GO:0030424">
    <property type="term" value="C:axon"/>
    <property type="evidence" value="ECO:0000303"/>
    <property type="project" value="UniProtKB"/>
</dbReference>
<dbReference type="GO" id="GO:0016020">
    <property type="term" value="C:membrane"/>
    <property type="evidence" value="ECO:0000303"/>
    <property type="project" value="UniProtKB"/>
</dbReference>
<dbReference type="GO" id="GO:0005886">
    <property type="term" value="C:plasma membrane"/>
    <property type="evidence" value="ECO:0000314"/>
    <property type="project" value="UniProtKB"/>
</dbReference>
<dbReference type="GO" id="GO:0042802">
    <property type="term" value="F:identical protein binding"/>
    <property type="evidence" value="ECO:0000353"/>
    <property type="project" value="IntAct"/>
</dbReference>
<dbReference type="GO" id="GO:0030215">
    <property type="term" value="F:semaphorin receptor binding"/>
    <property type="evidence" value="ECO:0000316"/>
    <property type="project" value="MGI"/>
</dbReference>
<dbReference type="GO" id="GO:0004888">
    <property type="term" value="F:transmembrane signaling receptor activity"/>
    <property type="evidence" value="ECO:0000315"/>
    <property type="project" value="UniProtKB"/>
</dbReference>
<dbReference type="GO" id="GO:0006915">
    <property type="term" value="P:apoptotic process"/>
    <property type="evidence" value="ECO:0000303"/>
    <property type="project" value="UniProtKB"/>
</dbReference>
<dbReference type="GO" id="GO:0007411">
    <property type="term" value="P:axon guidance"/>
    <property type="evidence" value="ECO:0000315"/>
    <property type="project" value="UniProtKB"/>
</dbReference>
<dbReference type="GO" id="GO:0007166">
    <property type="term" value="P:cell surface receptor signaling pathway"/>
    <property type="evidence" value="ECO:0000314"/>
    <property type="project" value="MGI"/>
</dbReference>
<dbReference type="GO" id="GO:0051642">
    <property type="term" value="P:centrosome localization"/>
    <property type="evidence" value="ECO:0000315"/>
    <property type="project" value="MGI"/>
</dbReference>
<dbReference type="GO" id="GO:0001764">
    <property type="term" value="P:neuron migration"/>
    <property type="evidence" value="ECO:0000315"/>
    <property type="project" value="UniProtKB"/>
</dbReference>
<dbReference type="GO" id="GO:2001224">
    <property type="term" value="P:positive regulation of neuron migration"/>
    <property type="evidence" value="ECO:0000315"/>
    <property type="project" value="UniProtKB"/>
</dbReference>
<dbReference type="GO" id="GO:0071526">
    <property type="term" value="P:semaphorin-plexin signaling pathway"/>
    <property type="evidence" value="ECO:0000315"/>
    <property type="project" value="UniProtKB"/>
</dbReference>
<dbReference type="CDD" id="cd11266">
    <property type="entry name" value="Sema_6A"/>
    <property type="match status" value="1"/>
</dbReference>
<dbReference type="FunFam" id="2.130.10.10:FF:000028">
    <property type="entry name" value="semaphorin-6A isoform X1"/>
    <property type="match status" value="1"/>
</dbReference>
<dbReference type="FunFam" id="3.30.1680.10:FF:000007">
    <property type="entry name" value="semaphorin-6A isoform X1"/>
    <property type="match status" value="1"/>
</dbReference>
<dbReference type="Gene3D" id="3.30.1680.10">
    <property type="entry name" value="ligand-binding face of the semaphorins, domain 2"/>
    <property type="match status" value="1"/>
</dbReference>
<dbReference type="Gene3D" id="2.130.10.10">
    <property type="entry name" value="YVTN repeat-like/Quinoprotein amine dehydrogenase"/>
    <property type="match status" value="1"/>
</dbReference>
<dbReference type="InterPro" id="IPR002165">
    <property type="entry name" value="Plexin_repeat"/>
</dbReference>
<dbReference type="InterPro" id="IPR001627">
    <property type="entry name" value="Semap_dom"/>
</dbReference>
<dbReference type="InterPro" id="IPR036352">
    <property type="entry name" value="Semap_dom_sf"/>
</dbReference>
<dbReference type="InterPro" id="IPR027231">
    <property type="entry name" value="Semaphorin"/>
</dbReference>
<dbReference type="InterPro" id="IPR015943">
    <property type="entry name" value="WD40/YVTN_repeat-like_dom_sf"/>
</dbReference>
<dbReference type="PANTHER" id="PTHR11036">
    <property type="entry name" value="SEMAPHORIN"/>
    <property type="match status" value="1"/>
</dbReference>
<dbReference type="PANTHER" id="PTHR11036:SF12">
    <property type="entry name" value="SEMAPHORIN-6A"/>
    <property type="match status" value="1"/>
</dbReference>
<dbReference type="Pfam" id="PF01437">
    <property type="entry name" value="PSI"/>
    <property type="match status" value="1"/>
</dbReference>
<dbReference type="Pfam" id="PF01403">
    <property type="entry name" value="Sema"/>
    <property type="match status" value="1"/>
</dbReference>
<dbReference type="SMART" id="SM00630">
    <property type="entry name" value="Sema"/>
    <property type="match status" value="1"/>
</dbReference>
<dbReference type="SUPFAM" id="SSF103575">
    <property type="entry name" value="Plexin repeat"/>
    <property type="match status" value="1"/>
</dbReference>
<dbReference type="SUPFAM" id="SSF101912">
    <property type="entry name" value="Sema domain"/>
    <property type="match status" value="1"/>
</dbReference>
<dbReference type="PROSITE" id="PS51004">
    <property type="entry name" value="SEMA"/>
    <property type="match status" value="1"/>
</dbReference>
<organism>
    <name type="scientific">Mus musculus</name>
    <name type="common">Mouse</name>
    <dbReference type="NCBI Taxonomy" id="10090"/>
    <lineage>
        <taxon>Eukaryota</taxon>
        <taxon>Metazoa</taxon>
        <taxon>Chordata</taxon>
        <taxon>Craniata</taxon>
        <taxon>Vertebrata</taxon>
        <taxon>Euteleostomi</taxon>
        <taxon>Mammalia</taxon>
        <taxon>Eutheria</taxon>
        <taxon>Euarchontoglires</taxon>
        <taxon>Glires</taxon>
        <taxon>Rodentia</taxon>
        <taxon>Myomorpha</taxon>
        <taxon>Muroidea</taxon>
        <taxon>Muridae</taxon>
        <taxon>Murinae</taxon>
        <taxon>Mus</taxon>
        <taxon>Mus</taxon>
    </lineage>
</organism>
<gene>
    <name type="primary">Sema6a</name>
    <name type="synonym">Semaq</name>
</gene>
<reference key="1">
    <citation type="journal article" date="2000" name="J. Biol. Chem.">
        <title>The orthologous human and murine semaphorin 6A-1 proteins (SEMA6A-1/Sema6A-1) bind to the enabled/vasodilator-stimulated phosphoprotein-like protein (EVL) via a novel carboxyl-terminal zyxin-like domain.</title>
        <authorList>
            <person name="Klostermann A."/>
            <person name="Lutz B."/>
            <person name="Gertler F."/>
            <person name="Behl C."/>
        </authorList>
    </citation>
    <scope>NUCLEOTIDE SEQUENCE [MRNA] (ISOFORM 2)</scope>
    <scope>INTERACTION WITH EVL</scope>
    <source>
        <tissue>Brain</tissue>
    </source>
</reference>
<reference key="2">
    <citation type="journal article" date="2004" name="Genome Res.">
        <title>The status, quality, and expansion of the NIH full-length cDNA project: the Mammalian Gene Collection (MGC).</title>
        <authorList>
            <consortium name="The MGC Project Team"/>
        </authorList>
    </citation>
    <scope>NUCLEOTIDE SEQUENCE [LARGE SCALE MRNA] (ISOFORMS 1 AND 3)</scope>
    <source>
        <strain>C57BL/6J</strain>
        <tissue>Brain</tissue>
    </source>
</reference>
<reference key="3">
    <citation type="journal article" date="1997" name="Mol. Cell. Neurosci.">
        <title>Cloning and expression of a novel murine semaphorin with structural similarity to insect semaphorin I.</title>
        <authorList>
            <person name="Zhou L."/>
            <person name="White F.A."/>
            <person name="Lentz S.I."/>
            <person name="Wright D.E."/>
            <person name="Fisher D.A."/>
            <person name="Snider W.D."/>
        </authorList>
    </citation>
    <scope>NUCLEOTIDE SEQUENCE [MRNA] OF 1-888 (ISOFORM 1)</scope>
</reference>
<reference key="4">
    <citation type="journal article" date="2005" name="Nat. Neurosci.">
        <title>The transmembrane semaphorin Sema6A controls cerebellar granule cell migration.</title>
        <authorList>
            <person name="Kerjan G."/>
            <person name="Dolan J."/>
            <person name="Haumaitre C."/>
            <person name="Schneider-Maunoury S."/>
            <person name="Fujisawa H."/>
            <person name="Mitchell K.J."/>
            <person name="Chedotal A."/>
        </authorList>
    </citation>
    <scope>FUNCTION</scope>
    <scope>DISRUPTION PHENOTYPE</scope>
    <scope>TISSUE SPECIFICITY</scope>
</reference>
<reference key="5">
    <citation type="journal article" date="2008" name="Neural Dev.">
        <title>Semaphorin-6A controls guidance of corticospinal tract axons at multiple choice points.</title>
        <authorList>
            <person name="Runker A.E."/>
            <person name="Little G.E."/>
            <person name="Suto F."/>
            <person name="Fujisawa H."/>
            <person name="Mitchell K.J."/>
        </authorList>
    </citation>
    <scope>FUNCTION</scope>
</reference>
<reference key="6">
    <citation type="journal article" date="2010" name="Nature">
        <title>Structural basis of semaphorin-plexin signalling.</title>
        <authorList>
            <person name="Janssen B.J."/>
            <person name="Robinson R.A."/>
            <person name="Perez-Branguli F."/>
            <person name="Bell C.H."/>
            <person name="Mitchell K.J."/>
            <person name="Siebold C."/>
            <person name="Jones E.Y."/>
        </authorList>
    </citation>
    <scope>X-RAY CRYSTALLOGRAPHY (2.2 ANGSTROMS) OF 19-571 IN COMPLEX WITH PLXNA2</scope>
    <scope>FUNCTION</scope>
    <scope>SUBUNIT</scope>
    <scope>GLYCOSYLATION AT ASN-65; ASN-282 AND ASN-434</scope>
    <scope>DISULFIDE BONDS</scope>
    <scope>MUTAGENESIS OF LEU-191 AND ILE-322</scope>
</reference>
<reference key="7">
    <citation type="journal article" date="2010" name="Nature">
        <title>Structural basis for semaphorin signalling through the plexin receptor.</title>
        <authorList>
            <person name="Nogi T."/>
            <person name="Yasui N."/>
            <person name="Mihara E."/>
            <person name="Matsunaga Y."/>
            <person name="Noda M."/>
            <person name="Yamashita N."/>
            <person name="Toyofuku T."/>
            <person name="Uchiyama S."/>
            <person name="Goshima Y."/>
            <person name="Kumanogoh A."/>
            <person name="Takagi J."/>
        </authorList>
    </citation>
    <scope>X-RAY CRYSTALLOGRAPHY (2.5 ANGSTROMS) OF 19-570 IN COMPLEX WITH PLXNA2</scope>
    <scope>FUNCTION</scope>
    <scope>SUBUNIT</scope>
    <scope>SUBCELLULAR LOCATION</scope>
    <scope>GLYCOSYLATION AT ASN-282 AND ASN-434</scope>
    <scope>DISULFIDE BONDS</scope>
    <scope>MUTAGENESIS OF HIS-212; LYS-393 AND MET-415</scope>
</reference>
<comment type="function">
    <text evidence="6 7 8 9">Cell surface receptor for PLXNA2 that plays an important role in cell-cell signaling. Required for normal granule cell migration in the developing cerebellum. Promotes reorganization of the actin cytoskeleton and plays an important role in axon guidance in the developing central nervous system. Can act as repulsive axon guidance cue. Has repulsive action towards migrating granular neurons. May play a role in channeling sympathetic axons into the sympathetic chains and controlling the temporal sequence of sympathetic target innervation.</text>
</comment>
<comment type="subunit">
    <text evidence="5 8 9">Active as a homodimer or oligomer. The SEMA6A homodimer interacts with a PLXNA2 homodimer, giving rise to a heterotetramer. Interacts with EVL.</text>
</comment>
<comment type="interaction">
    <interactant intactId="EBI-8057848">
        <id>O35464</id>
    </interactant>
    <interactant intactId="EBI-8057809">
        <id>Q80UG2</id>
        <label>Plxna4</label>
    </interactant>
    <organismsDiffer>false</organismsDiffer>
    <experiments>3</experiments>
</comment>
<comment type="interaction">
    <interactant intactId="EBI-15880936">
        <id>O35464-1</id>
    </interactant>
    <interactant intactId="EBI-771272">
        <id>P70207</id>
        <label>Plxna2</label>
    </interactant>
    <organismsDiffer>false</organismsDiffer>
    <experiments>5</experiments>
</comment>
<comment type="interaction">
    <interactant intactId="EBI-15880936">
        <id>O35464-1</id>
    </interactant>
    <interactant intactId="EBI-15880936">
        <id>O35464-1</id>
        <label>Sema6a</label>
    </interactant>
    <organismsDiffer>false</organismsDiffer>
    <experiments>9</experiments>
</comment>
<comment type="subcellular location">
    <subcellularLocation>
        <location evidence="9">Cell membrane</location>
        <topology evidence="9">Single-pass type I membrane protein</topology>
    </subcellularLocation>
</comment>
<comment type="alternative products">
    <event type="alternative splicing"/>
    <isoform>
        <id>O35464-1</id>
        <name>1</name>
        <sequence type="displayed"/>
    </isoform>
    <isoform>
        <id>O35464-2</id>
        <name>2</name>
        <sequence type="described" ref="VSP_012097"/>
    </isoform>
    <isoform>
        <id>O35464-3</id>
        <name>3</name>
        <sequence type="described" ref="VSP_012098"/>
    </isoform>
</comment>
<comment type="tissue specificity">
    <text evidence="6">Particularly high levels in spinal cord, cerebellum, metencephalon, superior and inferior colliculus, diencephalon, olfactory bulb and eye.</text>
</comment>
<comment type="developmental stage">
    <text>Temporally and spatially regulated during development.</text>
</comment>
<comment type="disruption phenotype">
    <text evidence="6">No visible phenotype. Mice are viable and fertile, and do not show any major behavioral defects. In developing cerebellum, migration of granule cells is impaired. Granule cells can form normal cell processes, but the movement of the nucleus seems to be impaired.</text>
</comment>
<comment type="similarity">
    <text evidence="12">Belongs to the semaphorin family.</text>
</comment>
<proteinExistence type="evidence at protein level"/>
<evidence type="ECO:0000250" key="1">
    <source>
        <dbReference type="UniProtKB" id="Q9H2E6"/>
    </source>
</evidence>
<evidence type="ECO:0000255" key="2"/>
<evidence type="ECO:0000255" key="3">
    <source>
        <dbReference type="PROSITE-ProRule" id="PRU00352"/>
    </source>
</evidence>
<evidence type="ECO:0000256" key="4">
    <source>
        <dbReference type="SAM" id="MobiDB-lite"/>
    </source>
</evidence>
<evidence type="ECO:0000269" key="5">
    <source>
    </source>
</evidence>
<evidence type="ECO:0000269" key="6">
    <source>
    </source>
</evidence>
<evidence type="ECO:0000269" key="7">
    <source>
    </source>
</evidence>
<evidence type="ECO:0000269" key="8">
    <source>
    </source>
</evidence>
<evidence type="ECO:0000269" key="9">
    <source>
    </source>
</evidence>
<evidence type="ECO:0000303" key="10">
    <source>
    </source>
</evidence>
<evidence type="ECO:0000303" key="11">
    <source>
    </source>
</evidence>
<evidence type="ECO:0000305" key="12"/>
<evidence type="ECO:0007829" key="13">
    <source>
        <dbReference type="PDB" id="3AFC"/>
    </source>
</evidence>
<evidence type="ECO:0007829" key="14">
    <source>
        <dbReference type="PDB" id="3OKW"/>
    </source>
</evidence>
<evidence type="ECO:0007829" key="15">
    <source>
        <dbReference type="PDB" id="3OKY"/>
    </source>
</evidence>
<keyword id="KW-0002">3D-structure</keyword>
<keyword id="KW-0025">Alternative splicing</keyword>
<keyword id="KW-1003">Cell membrane</keyword>
<keyword id="KW-0217">Developmental protein</keyword>
<keyword id="KW-0221">Differentiation</keyword>
<keyword id="KW-1015">Disulfide bond</keyword>
<keyword id="KW-0325">Glycoprotein</keyword>
<keyword id="KW-0472">Membrane</keyword>
<keyword id="KW-0524">Neurogenesis</keyword>
<keyword id="KW-0597">Phosphoprotein</keyword>
<keyword id="KW-1185">Reference proteome</keyword>
<keyword id="KW-0732">Signal</keyword>
<keyword id="KW-0812">Transmembrane</keyword>
<keyword id="KW-1133">Transmembrane helix</keyword>